<keyword id="KW-0119">Carbohydrate metabolism</keyword>
<keyword id="KW-0150">Chloroplast</keyword>
<keyword id="KW-0963">Cytoplasm</keyword>
<keyword id="KW-0238">DNA-binding</keyword>
<keyword id="KW-0597">Phosphoprotein</keyword>
<keyword id="KW-0934">Plastid</keyword>
<keyword id="KW-0624">Polysaccharide degradation</keyword>
<keyword id="KW-1185">Reference proteome</keyword>
<keyword id="KW-0694">RNA-binding</keyword>
<keyword id="KW-0698">rRNA processing</keyword>
<keyword id="KW-0699">rRNA-binding</keyword>
<keyword id="KW-0809">Transit peptide</keyword>
<accession>Q9SA52</accession>
<accession>O49260</accession>
<accession>Q8LAU2</accession>
<accession>Q8W4G5</accession>
<accession>Q9T0N9</accession>
<feature type="transit peptide" description="Chloroplast" evidence="10">
    <location>
        <begin position="1"/>
        <end position="50"/>
    </location>
</feature>
<feature type="chain" id="PRO_0000286529" description="Chloroplast stem-loop binding protein of 41 kDa b, chloroplastic">
    <location>
        <begin position="51"/>
        <end position="378"/>
    </location>
</feature>
<feature type="modified residue" description="Phosphoserine" evidence="1">
    <location>
        <position position="240"/>
    </location>
</feature>
<feature type="sequence conflict" description="In Ref. 2; CAA75602." evidence="10" ref="2">
    <location>
        <begin position="1"/>
        <end position="4"/>
    </location>
</feature>
<feature type="sequence conflict" description="In Ref. 1; CAA71589." evidence="10" ref="1">
    <original>S</original>
    <variation>F</variation>
    <location>
        <position position="170"/>
    </location>
</feature>
<feature type="sequence conflict" description="In Ref. 5; AAL32648." evidence="10" ref="5">
    <original>E</original>
    <variation>K</variation>
    <location>
        <position position="223"/>
    </location>
</feature>
<reference key="1">
    <citation type="submission" date="1997-01" db="EMBL/GenBank/DDBJ databases">
        <authorList>
            <person name="Koncz C."/>
            <person name="Nuotio S."/>
            <person name="Eckstein L."/>
        </authorList>
    </citation>
    <scope>NUCLEOTIDE SEQUENCE [MRNA]</scope>
</reference>
<reference key="2">
    <citation type="submission" date="1997-11" db="EMBL/GenBank/DDBJ databases">
        <authorList>
            <person name="Fulgosi H."/>
            <person name="Alcaraz J.-P."/>
            <person name="Herrmann R."/>
            <person name="Lerbs-Mache S."/>
        </authorList>
    </citation>
    <scope>NUCLEOTIDE SEQUENCE [MRNA]</scope>
</reference>
<reference key="3">
    <citation type="journal article" date="2000" name="Nature">
        <title>Sequence and analysis of chromosome 1 of the plant Arabidopsis thaliana.</title>
        <authorList>
            <person name="Theologis A."/>
            <person name="Ecker J.R."/>
            <person name="Palm C.J."/>
            <person name="Federspiel N.A."/>
            <person name="Kaul S."/>
            <person name="White O."/>
            <person name="Alonso J."/>
            <person name="Altafi H."/>
            <person name="Araujo R."/>
            <person name="Bowman C.L."/>
            <person name="Brooks S.Y."/>
            <person name="Buehler E."/>
            <person name="Chan A."/>
            <person name="Chao Q."/>
            <person name="Chen H."/>
            <person name="Cheuk R.F."/>
            <person name="Chin C.W."/>
            <person name="Chung M.K."/>
            <person name="Conn L."/>
            <person name="Conway A.B."/>
            <person name="Conway A.R."/>
            <person name="Creasy T.H."/>
            <person name="Dewar K."/>
            <person name="Dunn P."/>
            <person name="Etgu P."/>
            <person name="Feldblyum T.V."/>
            <person name="Feng J.-D."/>
            <person name="Fong B."/>
            <person name="Fujii C.Y."/>
            <person name="Gill J.E."/>
            <person name="Goldsmith A.D."/>
            <person name="Haas B."/>
            <person name="Hansen N.F."/>
            <person name="Hughes B."/>
            <person name="Huizar L."/>
            <person name="Hunter J.L."/>
            <person name="Jenkins J."/>
            <person name="Johnson-Hopson C."/>
            <person name="Khan S."/>
            <person name="Khaykin E."/>
            <person name="Kim C.J."/>
            <person name="Koo H.L."/>
            <person name="Kremenetskaia I."/>
            <person name="Kurtz D.B."/>
            <person name="Kwan A."/>
            <person name="Lam B."/>
            <person name="Langin-Hooper S."/>
            <person name="Lee A."/>
            <person name="Lee J.M."/>
            <person name="Lenz C.A."/>
            <person name="Li J.H."/>
            <person name="Li Y.-P."/>
            <person name="Lin X."/>
            <person name="Liu S.X."/>
            <person name="Liu Z.A."/>
            <person name="Luros J.S."/>
            <person name="Maiti R."/>
            <person name="Marziali A."/>
            <person name="Militscher J."/>
            <person name="Miranda M."/>
            <person name="Nguyen M."/>
            <person name="Nierman W.C."/>
            <person name="Osborne B.I."/>
            <person name="Pai G."/>
            <person name="Peterson J."/>
            <person name="Pham P.K."/>
            <person name="Rizzo M."/>
            <person name="Rooney T."/>
            <person name="Rowley D."/>
            <person name="Sakano H."/>
            <person name="Salzberg S.L."/>
            <person name="Schwartz J.R."/>
            <person name="Shinn P."/>
            <person name="Southwick A.M."/>
            <person name="Sun H."/>
            <person name="Tallon L.J."/>
            <person name="Tambunga G."/>
            <person name="Toriumi M.J."/>
            <person name="Town C.D."/>
            <person name="Utterback T."/>
            <person name="Van Aken S."/>
            <person name="Vaysberg M."/>
            <person name="Vysotskaia V.S."/>
            <person name="Walker M."/>
            <person name="Wu D."/>
            <person name="Yu G."/>
            <person name="Fraser C.M."/>
            <person name="Venter J.C."/>
            <person name="Davis R.W."/>
        </authorList>
    </citation>
    <scope>NUCLEOTIDE SEQUENCE [LARGE SCALE GENOMIC DNA]</scope>
    <source>
        <strain>cv. Columbia</strain>
    </source>
</reference>
<reference key="4">
    <citation type="journal article" date="2017" name="Plant J.">
        <title>Araport11: a complete reannotation of the Arabidopsis thaliana reference genome.</title>
        <authorList>
            <person name="Cheng C.Y."/>
            <person name="Krishnakumar V."/>
            <person name="Chan A.P."/>
            <person name="Thibaud-Nissen F."/>
            <person name="Schobel S."/>
            <person name="Town C.D."/>
        </authorList>
    </citation>
    <scope>GENOME REANNOTATION</scope>
    <source>
        <strain>cv. Columbia</strain>
    </source>
</reference>
<reference key="5">
    <citation type="journal article" date="2003" name="Science">
        <title>Empirical analysis of transcriptional activity in the Arabidopsis genome.</title>
        <authorList>
            <person name="Yamada K."/>
            <person name="Lim J."/>
            <person name="Dale J.M."/>
            <person name="Chen H."/>
            <person name="Shinn P."/>
            <person name="Palm C.J."/>
            <person name="Southwick A.M."/>
            <person name="Wu H.C."/>
            <person name="Kim C.J."/>
            <person name="Nguyen M."/>
            <person name="Pham P.K."/>
            <person name="Cheuk R.F."/>
            <person name="Karlin-Newmann G."/>
            <person name="Liu S.X."/>
            <person name="Lam B."/>
            <person name="Sakano H."/>
            <person name="Wu T."/>
            <person name="Yu G."/>
            <person name="Miranda M."/>
            <person name="Quach H.L."/>
            <person name="Tripp M."/>
            <person name="Chang C.H."/>
            <person name="Lee J.M."/>
            <person name="Toriumi M.J."/>
            <person name="Chan M.M."/>
            <person name="Tang C.C."/>
            <person name="Onodera C.S."/>
            <person name="Deng J.M."/>
            <person name="Akiyama K."/>
            <person name="Ansari Y."/>
            <person name="Arakawa T."/>
            <person name="Banh J."/>
            <person name="Banno F."/>
            <person name="Bowser L."/>
            <person name="Brooks S.Y."/>
            <person name="Carninci P."/>
            <person name="Chao Q."/>
            <person name="Choy N."/>
            <person name="Enju A."/>
            <person name="Goldsmith A.D."/>
            <person name="Gurjal M."/>
            <person name="Hansen N.F."/>
            <person name="Hayashizaki Y."/>
            <person name="Johnson-Hopson C."/>
            <person name="Hsuan V.W."/>
            <person name="Iida K."/>
            <person name="Karnes M."/>
            <person name="Khan S."/>
            <person name="Koesema E."/>
            <person name="Ishida J."/>
            <person name="Jiang P.X."/>
            <person name="Jones T."/>
            <person name="Kawai J."/>
            <person name="Kamiya A."/>
            <person name="Meyers C."/>
            <person name="Nakajima M."/>
            <person name="Narusaka M."/>
            <person name="Seki M."/>
            <person name="Sakurai T."/>
            <person name="Satou M."/>
            <person name="Tamse R."/>
            <person name="Vaysberg M."/>
            <person name="Wallender E.K."/>
            <person name="Wong C."/>
            <person name="Yamamura Y."/>
            <person name="Yuan S."/>
            <person name="Shinozaki K."/>
            <person name="Davis R.W."/>
            <person name="Theologis A."/>
            <person name="Ecker J.R."/>
        </authorList>
    </citation>
    <scope>NUCLEOTIDE SEQUENCE [LARGE SCALE MRNA]</scope>
    <source>
        <strain>cv. Columbia</strain>
    </source>
</reference>
<reference key="6">
    <citation type="submission" date="2002-03" db="EMBL/GenBank/DDBJ databases">
        <title>Full-length cDNA from Arabidopsis thaliana.</title>
        <authorList>
            <person name="Brover V.V."/>
            <person name="Troukhan M.E."/>
            <person name="Alexandrov N.A."/>
            <person name="Lu Y.-P."/>
            <person name="Flavell R.B."/>
            <person name="Feldmann K.A."/>
        </authorList>
    </citation>
    <scope>NUCLEOTIDE SEQUENCE [LARGE SCALE MRNA]</scope>
</reference>
<reference key="7">
    <citation type="journal article" date="2006" name="Plant Physiol.">
        <title>Protein profiling of plastoglobules in chloroplasts and chromoplasts. A surprising site for differential accumulation of metabolic enzymes.</title>
        <authorList>
            <person name="Ytterberg A.J."/>
            <person name="Peltier J.-B."/>
            <person name="van Wijk K.J."/>
        </authorList>
    </citation>
    <scope>IDENTIFICATION BY MASS SPECTROMETRY</scope>
    <scope>SUBCELLULAR LOCATION [LARGE SCALE ANALYSIS]</scope>
    <source>
        <strain>cv. Columbia</strain>
    </source>
</reference>
<reference key="8">
    <citation type="journal article" date="2006" name="Planta">
        <title>ABA-responsive RNA-binding proteins are involved in chloroplast and stromule function in Arabidopsis seedlings.</title>
        <authorList>
            <person name="Raab S."/>
            <person name="Toth Z."/>
            <person name="de Groot C."/>
            <person name="Stamminger T."/>
            <person name="Hoth S."/>
        </authorList>
    </citation>
    <scope>FUNCTION</scope>
    <scope>TISSUE SPECIFICITY</scope>
    <scope>DEVELOPMENTAL STAGE</scope>
    <scope>SUBCELLULAR LOCATION</scope>
    <scope>INDUCTION</scope>
    <source>
        <strain>cv. Columbia</strain>
    </source>
</reference>
<reference key="9">
    <citation type="journal article" date="2007" name="Plant Cell">
        <title>Proteome analysis of Arabidopsis leaf peroxisomes reveals novel targeting peptides, metabolic pathways, and defense mechanisms.</title>
        <authorList>
            <person name="Reumann S."/>
            <person name="Babujee L."/>
            <person name="Ma C."/>
            <person name="Wienkoop S."/>
            <person name="Siemsen T."/>
            <person name="Antonicelli G.E."/>
            <person name="Rasche N."/>
            <person name="Lueder F."/>
            <person name="Weckwerth W."/>
            <person name="Jahn O."/>
        </authorList>
    </citation>
    <scope>IDENTIFICATION BY MASS SPECTROMETRY</scope>
</reference>
<reference key="10">
    <citation type="journal article" date="2007" name="Plant J.">
        <title>Mutations in CHLOROPLAST RNA BINDING provide evidence for the involvement of the chloroplast in the regulation of the circadian clock in Arabidopsis.</title>
        <authorList>
            <person name="Hassidim M."/>
            <person name="Yakir E."/>
            <person name="Fradkin D."/>
            <person name="Hilman D."/>
            <person name="Kron I."/>
            <person name="Keren N."/>
            <person name="Harir Y."/>
            <person name="Yerushalmi S."/>
            <person name="Green R.M."/>
        </authorList>
    </citation>
    <scope>FUNCTION</scope>
    <scope>DISRUPTION PHENOTYPE</scope>
    <source>
        <strain>cv. Columbia</strain>
    </source>
</reference>
<reference key="11">
    <citation type="journal article" date="2008" name="Plant Mol. Biol.">
        <title>Arabidopsis thaliana mutants reveal a role for CSP41a and CSP41b, two ribosome-associated endonucleases, in chloroplast ribosomal RNA metabolism.</title>
        <authorList>
            <person name="Beligni M.V."/>
            <person name="Mayfield S.P."/>
        </authorList>
    </citation>
    <scope>FUNCTION</scope>
    <scope>DISRUPTION PHENOTYPE</scope>
    <source>
        <strain>cv. Columbia</strain>
    </source>
</reference>
<reference key="12">
    <citation type="journal article" date="2008" name="PLoS ONE">
        <title>Sorting signals, N-terminal modifications and abundance of the chloroplast proteome.</title>
        <authorList>
            <person name="Zybailov B."/>
            <person name="Rutschow H."/>
            <person name="Friso G."/>
            <person name="Rudella A."/>
            <person name="Emanuelsson O."/>
            <person name="Sun Q."/>
            <person name="van Wijk K.J."/>
        </authorList>
    </citation>
    <scope>IDENTIFICATION BY MASS SPECTROMETRY</scope>
    <scope>SUBCELLULAR LOCATION [LARGE SCALE ANALYSIS]</scope>
</reference>
<reference key="13">
    <citation type="journal article" date="2009" name="Plant Mol. Biol.">
        <title>The RNA-binding proteins CSP41a and CSP41b may regulate transcription and translation of chloroplast-encoded RNAs in Arabidopsis.</title>
        <authorList>
            <person name="Bollenbach T.J."/>
            <person name="Sharwood R.E."/>
            <person name="Gutierrez R."/>
            <person name="Lerbs-Mache S."/>
            <person name="Stern D.B."/>
        </authorList>
    </citation>
    <scope>FUNCTION</scope>
    <scope>SUBUNIT</scope>
    <scope>DISRUPTION PHENOTYPE</scope>
    <source>
        <strain>cv. Columbia</strain>
    </source>
</reference>
<reference key="14">
    <citation type="journal article" date="2011" name="J. Plant Physiol.">
        <title>Identification of a novel heteroglycan-interacting protein, HIP 1.3, from Arabidopsis thaliana.</title>
        <authorList>
            <person name="Fettke J."/>
            <person name="Nunes-Nesi A."/>
            <person name="Fernie A.R."/>
            <person name="Steup M."/>
        </authorList>
    </citation>
    <scope>FUNCTION</scope>
    <scope>DISRUPTION PHENOTYPE</scope>
    <scope>TISSUE SPECIFICITY</scope>
    <scope>SUBCELLULAR LOCATION</scope>
    <source>
        <strain>cv. Columbia</strain>
    </source>
</reference>
<reference key="15">
    <citation type="journal article" date="2014" name="Front. Plant Sci.">
        <title>Plastid encoded RNA polymerase activity and expression of photosynthesis genes required for embryo and seed development in Arabidopsis.</title>
        <authorList>
            <person name="Kremnev D."/>
            <person name="Strand A."/>
        </authorList>
    </citation>
    <scope>FUNCTION</scope>
    <scope>DISRUPTION PHENOTYPE</scope>
    <scope>INTERACTION WITH PRIN2</scope>
    <source>
        <strain>cv. Columbia</strain>
    </source>
</reference>
<organism>
    <name type="scientific">Arabidopsis thaliana</name>
    <name type="common">Mouse-ear cress</name>
    <dbReference type="NCBI Taxonomy" id="3702"/>
    <lineage>
        <taxon>Eukaryota</taxon>
        <taxon>Viridiplantae</taxon>
        <taxon>Streptophyta</taxon>
        <taxon>Embryophyta</taxon>
        <taxon>Tracheophyta</taxon>
        <taxon>Spermatophyta</taxon>
        <taxon>Magnoliopsida</taxon>
        <taxon>eudicotyledons</taxon>
        <taxon>Gunneridae</taxon>
        <taxon>Pentapetalae</taxon>
        <taxon>rosids</taxon>
        <taxon>malvids</taxon>
        <taxon>Brassicales</taxon>
        <taxon>Brassicaceae</taxon>
        <taxon>Camelineae</taxon>
        <taxon>Arabidopsis</taxon>
    </lineage>
</organism>
<sequence length="378" mass="42620">MAKMMMLQQHQPSFSLLTSSLSDFNGAKLHLQVQYKRKVHQPKGALYVSASSEKKILIMGGTRFIGLFLSRILVKEGHQVTLFTRGKSPIAKQLPGESDQDFADFSSKILHLKGDRKDYDFVKSSLSAEGFDVVYDINGREAEEVEPILEALPKLEQYIYCSSAGVYLKSDILPHCEEDAVDPKSRHKGKLETESLLQSKGVNWTSIRPVYIYGPLNYNPVEEWFFHRLKAGRPIPVPNSGIQISQLGHVKDLATAFLNVLGNEKASREIFNISGEKYVTFDGLAKACAKAGGFPEPEIVHYNPKEFDFGKKKAFPFRDQHFFASVEKAKHVLGWKPEFDLVEGLTDSYNLDFGRGTFRKEADFTTDDMILSKKLVLQ</sequence>
<protein>
    <recommendedName>
        <fullName>Chloroplast stem-loop binding protein of 41 kDa b, chloroplastic</fullName>
        <shortName>CSP41-b</shortName>
    </recommendedName>
    <alternativeName>
        <fullName>Heteroglycan-interacting protein 1.3</fullName>
    </alternativeName>
    <alternativeName>
        <fullName>Protein CHLOROPLAST RNA BINDING</fullName>
    </alternativeName>
    <alternativeName>
        <fullName>Protein Gb5f</fullName>
    </alternativeName>
</protein>
<comment type="function">
    <text evidence="3 4 5 7 8 9">Binds and cleaves RNA, particularly in stem-loops. Associates with pre-ribosomal particles in chloroplasts, and participates in chloroplast ribosomal RNA metabolism, probably during the final steps of 23S rRNA maturation. May enhance transcription by the plastid-encoded polymerase and translation in plastid via the stabilization of ribosome assembly intermediates. Required for chloroplast integrity. Involved in the regulation of the circadian system. Involved in the regulation of heteroglycans and monosaccharide mobilization. Required for full expression of genes transcribed by the plastid-encoded RNA polymerase (PEP). Essential for embryo development (PubMed:25161659).</text>
</comment>
<comment type="subunit">
    <text evidence="7 9">Component of a complex made of CSP41A, CSP41B, ribosomes, and the plastid-encoded RNA polymerase. Interacts with CSP41A. Binds DNA when in complex with PRIN2 (PubMed:25161659).</text>
</comment>
<comment type="subcellular location">
    <subcellularLocation>
        <location evidence="2">Plastid</location>
        <location evidence="2">Chloroplast</location>
        <location evidence="2">Plastoglobule</location>
    </subcellularLocation>
    <subcellularLocation>
        <location evidence="6">Plastid</location>
        <location evidence="6">Chloroplast</location>
    </subcellularLocation>
    <subcellularLocation>
        <location>Cytoplasm</location>
    </subcellularLocation>
    <text evidence="3 8">Present in stromules (PubMed:16633814). In the cytoplasm, accumulates around chloroplasts (PubMed:21087810).</text>
</comment>
<comment type="tissue specificity">
    <text evidence="3 8">Highly expressed in seedlings, particularly in photosynthetically active organs. Mostly expressed in young and mature leaves, and, to a lower extent, in flowers. Low expression in etiolated seedlings compared to green seedlings.</text>
</comment>
<comment type="developmental stage">
    <text evidence="3">In young seedlings, expressed in hypocotyls and cotyledons. In older seedlings, limited to the outer epidermal cell layer of leaves and petioles (including guard cells). Present in trichomes and hydathodes. In flowers, detected in sepals and siliques.</text>
</comment>
<comment type="induction">
    <text evidence="3">Expressed with a circadian rhythm showing a peak during the end of the day (under long day conditions). Repressed during senescence and upon water stress. Accumulates at wounding sites. Altered expression of both oscillator and output genes.</text>
</comment>
<comment type="disruption phenotype">
    <text evidence="4 5 7 8 9">Small and pale plants, with altered chloroplast morphology (anarchic membrane organization) and reduced photosynthetic performance associated with a reduction in CSP41A levels. Altered monosaccharide pattern of heteroglycans. Lethal when associated with CSP41A disruption. Reduced transcript levels of photosynthesis genes. Defects in embryo development. The csp41b-2 prin2-2 double mutant is embryo lethal (PubMed:25161659).</text>
</comment>
<comment type="similarity">
    <text evidence="10">Belongs to the NAD(P)-dependent epimerase/dehydratase family.</text>
</comment>
<evidence type="ECO:0000250" key="1">
    <source>
        <dbReference type="UniProtKB" id="Q9LYA9"/>
    </source>
</evidence>
<evidence type="ECO:0000269" key="2">
    <source>
    </source>
</evidence>
<evidence type="ECO:0000269" key="3">
    <source>
    </source>
</evidence>
<evidence type="ECO:0000269" key="4">
    <source>
    </source>
</evidence>
<evidence type="ECO:0000269" key="5">
    <source>
    </source>
</evidence>
<evidence type="ECO:0000269" key="6">
    <source>
    </source>
</evidence>
<evidence type="ECO:0000269" key="7">
    <source>
    </source>
</evidence>
<evidence type="ECO:0000269" key="8">
    <source>
    </source>
</evidence>
<evidence type="ECO:0000269" key="9">
    <source>
    </source>
</evidence>
<evidence type="ECO:0000305" key="10"/>
<dbReference type="EMBL" id="Y10557">
    <property type="protein sequence ID" value="CAA71589.1"/>
    <property type="molecule type" value="mRNA"/>
</dbReference>
<dbReference type="EMBL" id="Y15382">
    <property type="protein sequence ID" value="CAA75602.1"/>
    <property type="molecule type" value="mRNA"/>
</dbReference>
<dbReference type="EMBL" id="AC006416">
    <property type="protein sequence ID" value="AAD18098.1"/>
    <property type="molecule type" value="Genomic_DNA"/>
</dbReference>
<dbReference type="EMBL" id="CP002684">
    <property type="protein sequence ID" value="AEE28431.1"/>
    <property type="molecule type" value="Genomic_DNA"/>
</dbReference>
<dbReference type="EMBL" id="AY070022">
    <property type="protein sequence ID" value="AAL47493.1"/>
    <property type="molecule type" value="mRNA"/>
</dbReference>
<dbReference type="EMBL" id="AF428282">
    <property type="protein sequence ID" value="AAL16114.1"/>
    <property type="molecule type" value="mRNA"/>
</dbReference>
<dbReference type="EMBL" id="AY035050">
    <property type="protein sequence ID" value="AAK59555.1"/>
    <property type="molecule type" value="mRNA"/>
</dbReference>
<dbReference type="EMBL" id="AF325043">
    <property type="protein sequence ID" value="AAG40395.1"/>
    <property type="molecule type" value="mRNA"/>
</dbReference>
<dbReference type="EMBL" id="AY062570">
    <property type="protein sequence ID" value="AAL32648.1"/>
    <property type="molecule type" value="mRNA"/>
</dbReference>
<dbReference type="EMBL" id="AY087609">
    <property type="protein sequence ID" value="AAM65150.1"/>
    <property type="molecule type" value="mRNA"/>
</dbReference>
<dbReference type="PIR" id="E86226">
    <property type="entry name" value="E86226"/>
</dbReference>
<dbReference type="PIR" id="T51863">
    <property type="entry name" value="T51863"/>
</dbReference>
<dbReference type="PIR" id="T52072">
    <property type="entry name" value="T52072"/>
</dbReference>
<dbReference type="RefSeq" id="NP_172405.1">
    <property type="nucleotide sequence ID" value="NM_100804.4"/>
</dbReference>
<dbReference type="SMR" id="Q9SA52"/>
<dbReference type="BioGRID" id="22696">
    <property type="interactions" value="11"/>
</dbReference>
<dbReference type="FunCoup" id="Q9SA52">
    <property type="interactions" value="974"/>
</dbReference>
<dbReference type="STRING" id="3702.Q9SA52"/>
<dbReference type="iPTMnet" id="Q9SA52"/>
<dbReference type="MetOSite" id="Q9SA52"/>
<dbReference type="PaxDb" id="3702-AT1G09340.1"/>
<dbReference type="EnsemblPlants" id="AT1G09340.1">
    <property type="protein sequence ID" value="AT1G09340.1"/>
    <property type="gene ID" value="AT1G09340"/>
</dbReference>
<dbReference type="GeneID" id="837455"/>
<dbReference type="Gramene" id="AT1G09340.1">
    <property type="protein sequence ID" value="AT1G09340.1"/>
    <property type="gene ID" value="AT1G09340"/>
</dbReference>
<dbReference type="KEGG" id="ath:AT1G09340"/>
<dbReference type="Araport" id="AT1G09340"/>
<dbReference type="TAIR" id="AT1G09340">
    <property type="gene designation" value="CRB"/>
</dbReference>
<dbReference type="eggNOG" id="ENOG502QPZ0">
    <property type="taxonomic scope" value="Eukaryota"/>
</dbReference>
<dbReference type="HOGENOM" id="CLU_050934_0_1_1"/>
<dbReference type="InParanoid" id="Q9SA52"/>
<dbReference type="OMA" id="HFVYMSS"/>
<dbReference type="OrthoDB" id="419598at2759"/>
<dbReference type="PhylomeDB" id="Q9SA52"/>
<dbReference type="PRO" id="PR:Q9SA52"/>
<dbReference type="Proteomes" id="UP000006548">
    <property type="component" value="Chromosome 1"/>
</dbReference>
<dbReference type="ExpressionAtlas" id="Q9SA52">
    <property type="expression patterns" value="baseline and differential"/>
</dbReference>
<dbReference type="GO" id="GO:0048046">
    <property type="term" value="C:apoplast"/>
    <property type="evidence" value="ECO:0007005"/>
    <property type="project" value="TAIR"/>
</dbReference>
<dbReference type="GO" id="GO:0009507">
    <property type="term" value="C:chloroplast"/>
    <property type="evidence" value="ECO:0007005"/>
    <property type="project" value="TAIR"/>
</dbReference>
<dbReference type="GO" id="GO:0009941">
    <property type="term" value="C:chloroplast envelope"/>
    <property type="evidence" value="ECO:0007005"/>
    <property type="project" value="TAIR"/>
</dbReference>
<dbReference type="GO" id="GO:0009570">
    <property type="term" value="C:chloroplast stroma"/>
    <property type="evidence" value="ECO:0007005"/>
    <property type="project" value="TAIR"/>
</dbReference>
<dbReference type="GO" id="GO:0005829">
    <property type="term" value="C:cytosol"/>
    <property type="evidence" value="ECO:0007005"/>
    <property type="project" value="TAIR"/>
</dbReference>
<dbReference type="GO" id="GO:0005576">
    <property type="term" value="C:extracellular region"/>
    <property type="evidence" value="ECO:0007005"/>
    <property type="project" value="TAIR"/>
</dbReference>
<dbReference type="GO" id="GO:0005777">
    <property type="term" value="C:peroxisome"/>
    <property type="evidence" value="ECO:0007005"/>
    <property type="project" value="TAIR"/>
</dbReference>
<dbReference type="GO" id="GO:0000325">
    <property type="term" value="C:plant-type vacuole"/>
    <property type="evidence" value="ECO:0007005"/>
    <property type="project" value="TAIR"/>
</dbReference>
<dbReference type="GO" id="GO:0009506">
    <property type="term" value="C:plasmodesma"/>
    <property type="evidence" value="ECO:0007005"/>
    <property type="project" value="TAIR"/>
</dbReference>
<dbReference type="GO" id="GO:0000427">
    <property type="term" value="C:plastid-encoded plastid RNA polymerase complex"/>
    <property type="evidence" value="ECO:0000315"/>
    <property type="project" value="UniProtKB"/>
</dbReference>
<dbReference type="GO" id="GO:0010287">
    <property type="term" value="C:plastoglobule"/>
    <property type="evidence" value="ECO:0007005"/>
    <property type="project" value="TAIR"/>
</dbReference>
<dbReference type="GO" id="GO:0005840">
    <property type="term" value="C:ribosome"/>
    <property type="evidence" value="ECO:0000314"/>
    <property type="project" value="TAIR"/>
</dbReference>
<dbReference type="GO" id="GO:0010319">
    <property type="term" value="C:stromule"/>
    <property type="evidence" value="ECO:0000314"/>
    <property type="project" value="UniProtKB"/>
</dbReference>
<dbReference type="GO" id="GO:0003677">
    <property type="term" value="F:DNA binding"/>
    <property type="evidence" value="ECO:0000314"/>
    <property type="project" value="UniProtKB"/>
</dbReference>
<dbReference type="GO" id="GO:0010297">
    <property type="term" value="F:heteropolysaccharide binding"/>
    <property type="evidence" value="ECO:0000314"/>
    <property type="project" value="UniProtKB"/>
</dbReference>
<dbReference type="GO" id="GO:0003729">
    <property type="term" value="F:mRNA binding"/>
    <property type="evidence" value="ECO:0000314"/>
    <property type="project" value="TAIR"/>
</dbReference>
<dbReference type="GO" id="GO:0003723">
    <property type="term" value="F:RNA binding"/>
    <property type="evidence" value="ECO:0000314"/>
    <property type="project" value="UniProtKB"/>
</dbReference>
<dbReference type="GO" id="GO:0019843">
    <property type="term" value="F:rRNA binding"/>
    <property type="evidence" value="ECO:0007669"/>
    <property type="project" value="UniProtKB-KW"/>
</dbReference>
<dbReference type="GO" id="GO:0042631">
    <property type="term" value="P:cellular response to water deprivation"/>
    <property type="evidence" value="ECO:0000270"/>
    <property type="project" value="UniProtKB"/>
</dbReference>
<dbReference type="GO" id="GO:0009658">
    <property type="term" value="P:chloroplast organization"/>
    <property type="evidence" value="ECO:0000315"/>
    <property type="project" value="TAIR"/>
</dbReference>
<dbReference type="GO" id="GO:0007623">
    <property type="term" value="P:circadian rhythm"/>
    <property type="evidence" value="ECO:0000315"/>
    <property type="project" value="TAIR"/>
</dbReference>
<dbReference type="GO" id="GO:0005996">
    <property type="term" value="P:monosaccharide metabolic process"/>
    <property type="evidence" value="ECO:0000315"/>
    <property type="project" value="UniProtKB"/>
</dbReference>
<dbReference type="GO" id="GO:0032544">
    <property type="term" value="P:plastid translation"/>
    <property type="evidence" value="ECO:0000315"/>
    <property type="project" value="UniProtKB"/>
</dbReference>
<dbReference type="GO" id="GO:0000272">
    <property type="term" value="P:polysaccharide catabolic process"/>
    <property type="evidence" value="ECO:0007669"/>
    <property type="project" value="UniProtKB-KW"/>
</dbReference>
<dbReference type="GO" id="GO:0045893">
    <property type="term" value="P:positive regulation of DNA-templated transcription"/>
    <property type="evidence" value="ECO:0000315"/>
    <property type="project" value="UniProtKB"/>
</dbReference>
<dbReference type="GO" id="GO:0045727">
    <property type="term" value="P:positive regulation of translation"/>
    <property type="evidence" value="ECO:0000315"/>
    <property type="project" value="UniProtKB"/>
</dbReference>
<dbReference type="GO" id="GO:0010468">
    <property type="term" value="P:regulation of gene expression"/>
    <property type="evidence" value="ECO:0000315"/>
    <property type="project" value="UniProtKB"/>
</dbReference>
<dbReference type="GO" id="GO:0009409">
    <property type="term" value="P:response to cold"/>
    <property type="evidence" value="ECO:0000270"/>
    <property type="project" value="TAIR"/>
</dbReference>
<dbReference type="GO" id="GO:0009611">
    <property type="term" value="P:response to wounding"/>
    <property type="evidence" value="ECO:0000270"/>
    <property type="project" value="UniProtKB"/>
</dbReference>
<dbReference type="GO" id="GO:0006364">
    <property type="term" value="P:rRNA processing"/>
    <property type="evidence" value="ECO:0000316"/>
    <property type="project" value="TAIR"/>
</dbReference>
<dbReference type="CDD" id="cd05265">
    <property type="entry name" value="SDR_a1"/>
    <property type="match status" value="1"/>
</dbReference>
<dbReference type="FunFam" id="3.40.50.720:FF:000313">
    <property type="entry name" value="Chloroplast stem-loop binding protein of 41 kDa b, chloroplastic"/>
    <property type="match status" value="1"/>
</dbReference>
<dbReference type="Gene3D" id="3.40.50.720">
    <property type="entry name" value="NAD(P)-binding Rossmann-like Domain"/>
    <property type="match status" value="1"/>
</dbReference>
<dbReference type="InterPro" id="IPR001509">
    <property type="entry name" value="Epimerase_deHydtase"/>
</dbReference>
<dbReference type="InterPro" id="IPR036291">
    <property type="entry name" value="NAD(P)-bd_dom_sf"/>
</dbReference>
<dbReference type="PANTHER" id="PTHR43725:SF8">
    <property type="entry name" value="CHLOROPLAST STEM-LOOP BINDING PROTEIN OF 41 KDA B, CHLOROPLASTIC"/>
    <property type="match status" value="1"/>
</dbReference>
<dbReference type="PANTHER" id="PTHR43725">
    <property type="entry name" value="UDP-GLUCOSE 4-EPIMERASE"/>
    <property type="match status" value="1"/>
</dbReference>
<dbReference type="Pfam" id="PF01370">
    <property type="entry name" value="Epimerase"/>
    <property type="match status" value="1"/>
</dbReference>
<dbReference type="SUPFAM" id="SSF51735">
    <property type="entry name" value="NAD(P)-binding Rossmann-fold domains"/>
    <property type="match status" value="1"/>
</dbReference>
<name>CP41B_ARATH</name>
<gene>
    <name type="primary">CSP41B</name>
    <name type="synonym">CRB</name>
    <name type="synonym">HIP1.3</name>
    <name type="ordered locus">At1g09340</name>
    <name type="ORF">T31J12.6</name>
</gene>
<proteinExistence type="evidence at protein level"/>